<protein>
    <recommendedName>
        <fullName evidence="1">2-dehydro-3-deoxyphosphooctonate aldolase</fullName>
        <ecNumber evidence="1">2.5.1.55</ecNumber>
    </recommendedName>
    <alternativeName>
        <fullName evidence="1">3-deoxy-D-manno-octulosonic acid 8-phosphate synthase</fullName>
    </alternativeName>
    <alternativeName>
        <fullName evidence="1">KDO-8-phosphate synthase</fullName>
        <shortName evidence="1">KDO 8-P synthase</shortName>
        <shortName evidence="1">KDOPS</shortName>
    </alternativeName>
    <alternativeName>
        <fullName evidence="1">Phospho-2-dehydro-3-deoxyoctonate aldolase</fullName>
    </alternativeName>
</protein>
<organism>
    <name type="scientific">Hahella chejuensis (strain KCTC 2396)</name>
    <dbReference type="NCBI Taxonomy" id="349521"/>
    <lineage>
        <taxon>Bacteria</taxon>
        <taxon>Pseudomonadati</taxon>
        <taxon>Pseudomonadota</taxon>
        <taxon>Gammaproteobacteria</taxon>
        <taxon>Oceanospirillales</taxon>
        <taxon>Hahellaceae</taxon>
        <taxon>Hahella</taxon>
    </lineage>
</organism>
<dbReference type="EC" id="2.5.1.55" evidence="1"/>
<dbReference type="EMBL" id="CP000155">
    <property type="protein sequence ID" value="ABC28703.1"/>
    <property type="molecule type" value="Genomic_DNA"/>
</dbReference>
<dbReference type="RefSeq" id="WP_011395775.1">
    <property type="nucleotide sequence ID" value="NC_007645.1"/>
</dbReference>
<dbReference type="SMR" id="Q2SKX1"/>
<dbReference type="STRING" id="349521.HCH_01866"/>
<dbReference type="KEGG" id="hch:HCH_01866"/>
<dbReference type="eggNOG" id="COG2877">
    <property type="taxonomic scope" value="Bacteria"/>
</dbReference>
<dbReference type="HOGENOM" id="CLU_036666_0_0_6"/>
<dbReference type="OrthoDB" id="9776934at2"/>
<dbReference type="UniPathway" id="UPA00030"/>
<dbReference type="UniPathway" id="UPA00357">
    <property type="reaction ID" value="UER00474"/>
</dbReference>
<dbReference type="Proteomes" id="UP000000238">
    <property type="component" value="Chromosome"/>
</dbReference>
<dbReference type="GO" id="GO:0005737">
    <property type="term" value="C:cytoplasm"/>
    <property type="evidence" value="ECO:0007669"/>
    <property type="project" value="UniProtKB-SubCell"/>
</dbReference>
<dbReference type="GO" id="GO:0008676">
    <property type="term" value="F:3-deoxy-8-phosphooctulonate synthase activity"/>
    <property type="evidence" value="ECO:0007669"/>
    <property type="project" value="UniProtKB-UniRule"/>
</dbReference>
<dbReference type="GO" id="GO:0019294">
    <property type="term" value="P:keto-3-deoxy-D-manno-octulosonic acid biosynthetic process"/>
    <property type="evidence" value="ECO:0007669"/>
    <property type="project" value="UniProtKB-UniRule"/>
</dbReference>
<dbReference type="Gene3D" id="3.20.20.70">
    <property type="entry name" value="Aldolase class I"/>
    <property type="match status" value="1"/>
</dbReference>
<dbReference type="HAMAP" id="MF_00056">
    <property type="entry name" value="KDO8P_synth"/>
    <property type="match status" value="1"/>
</dbReference>
<dbReference type="InterPro" id="IPR013785">
    <property type="entry name" value="Aldolase_TIM"/>
</dbReference>
<dbReference type="InterPro" id="IPR006218">
    <property type="entry name" value="DAHP1/KDSA"/>
</dbReference>
<dbReference type="InterPro" id="IPR006269">
    <property type="entry name" value="KDO8P_synthase"/>
</dbReference>
<dbReference type="NCBIfam" id="TIGR01362">
    <property type="entry name" value="KDO8P_synth"/>
    <property type="match status" value="1"/>
</dbReference>
<dbReference type="NCBIfam" id="NF003543">
    <property type="entry name" value="PRK05198.1"/>
    <property type="match status" value="1"/>
</dbReference>
<dbReference type="NCBIfam" id="NF009109">
    <property type="entry name" value="PRK12457.1"/>
    <property type="match status" value="1"/>
</dbReference>
<dbReference type="PANTHER" id="PTHR21057">
    <property type="entry name" value="PHOSPHO-2-DEHYDRO-3-DEOXYHEPTONATE ALDOLASE"/>
    <property type="match status" value="1"/>
</dbReference>
<dbReference type="Pfam" id="PF00793">
    <property type="entry name" value="DAHP_synth_1"/>
    <property type="match status" value="1"/>
</dbReference>
<dbReference type="SUPFAM" id="SSF51569">
    <property type="entry name" value="Aldolase"/>
    <property type="match status" value="1"/>
</dbReference>
<keyword id="KW-0963">Cytoplasm</keyword>
<keyword id="KW-0448">Lipopolysaccharide biosynthesis</keyword>
<keyword id="KW-1185">Reference proteome</keyword>
<keyword id="KW-0808">Transferase</keyword>
<gene>
    <name evidence="1" type="primary">kdsA</name>
    <name type="ordered locus">HCH_01866</name>
</gene>
<proteinExistence type="inferred from homology"/>
<reference key="1">
    <citation type="journal article" date="2005" name="Nucleic Acids Res.">
        <title>Genomic blueprint of Hahella chejuensis, a marine microbe producing an algicidal agent.</title>
        <authorList>
            <person name="Jeong H."/>
            <person name="Yim J.H."/>
            <person name="Lee C."/>
            <person name="Choi S.-H."/>
            <person name="Park Y.K."/>
            <person name="Yoon S.H."/>
            <person name="Hur C.-G."/>
            <person name="Kang H.-Y."/>
            <person name="Kim D."/>
            <person name="Lee H.H."/>
            <person name="Park K.H."/>
            <person name="Park S.-H."/>
            <person name="Park H.-S."/>
            <person name="Lee H.K."/>
            <person name="Oh T.K."/>
            <person name="Kim J.F."/>
        </authorList>
    </citation>
    <scope>NUCLEOTIDE SEQUENCE [LARGE SCALE GENOMIC DNA]</scope>
    <source>
        <strain>KCTC 2396</strain>
    </source>
</reference>
<feature type="chain" id="PRO_0000304454" description="2-dehydro-3-deoxyphosphooctonate aldolase">
    <location>
        <begin position="1"/>
        <end position="281"/>
    </location>
</feature>
<comment type="catalytic activity">
    <reaction evidence="1">
        <text>D-arabinose 5-phosphate + phosphoenolpyruvate + H2O = 3-deoxy-alpha-D-manno-2-octulosonate-8-phosphate + phosphate</text>
        <dbReference type="Rhea" id="RHEA:14053"/>
        <dbReference type="ChEBI" id="CHEBI:15377"/>
        <dbReference type="ChEBI" id="CHEBI:43474"/>
        <dbReference type="ChEBI" id="CHEBI:57693"/>
        <dbReference type="ChEBI" id="CHEBI:58702"/>
        <dbReference type="ChEBI" id="CHEBI:85985"/>
        <dbReference type="EC" id="2.5.1.55"/>
    </reaction>
</comment>
<comment type="pathway">
    <text evidence="1">Carbohydrate biosynthesis; 3-deoxy-D-manno-octulosonate biosynthesis; 3-deoxy-D-manno-octulosonate from D-ribulose 5-phosphate: step 2/3.</text>
</comment>
<comment type="pathway">
    <text evidence="1">Bacterial outer membrane biogenesis; lipopolysaccharide biosynthesis.</text>
</comment>
<comment type="subcellular location">
    <subcellularLocation>
        <location evidence="1">Cytoplasm</location>
    </subcellularLocation>
</comment>
<comment type="similarity">
    <text evidence="1">Belongs to the KdsA family.</text>
</comment>
<accession>Q2SKX1</accession>
<evidence type="ECO:0000255" key="1">
    <source>
        <dbReference type="HAMAP-Rule" id="MF_00056"/>
    </source>
</evidence>
<sequence length="281" mass="30704">MSTRTVKVGGIDIANDRPFVLFGGMNVLESRDLALQVAESYVKVTQKLGIPYVFKASFDKANRSSINSYRGPGLDEGLRIFEEIKRTFNVPVITDIHEPHQAQPVAEVADIIQLPAFLSRQTDLVAAMARTGCPVNIKKAQFLAPQEMKHILSKCEEAGNDQLILCERGSSFGYNNLVVDMLGFGIMKQFGYPVFFDVTHSLQMPGGLSSSAGGRREQVVQLARSGMAVGLAGLFLEAHPDPDVAKCDGPCALRLSQLEPFLAQMKALDDMVKQFPNIDTA</sequence>
<name>KDSA_HAHCH</name>